<comment type="function">
    <text evidence="5">Sulfhydryl oxidase involved in the regulation of cation homeostasis. Positively regulates shoot accumulation of K(+) and inhibits accumulation of toxic cations. Acts at the level of root K(+) efflux systems involved in xylem loading (root symplast-xylem interface).</text>
</comment>
<comment type="catalytic activity">
    <reaction evidence="7">
        <text>2 R'C(R)SH + O2 = R'C(R)S-S(R)CR' + H2O2</text>
        <dbReference type="Rhea" id="RHEA:17357"/>
        <dbReference type="ChEBI" id="CHEBI:15379"/>
        <dbReference type="ChEBI" id="CHEBI:16240"/>
        <dbReference type="ChEBI" id="CHEBI:16520"/>
        <dbReference type="ChEBI" id="CHEBI:17412"/>
        <dbReference type="EC" id="1.8.3.2"/>
    </reaction>
    <physiologicalReaction direction="left-to-right" evidence="7">
        <dbReference type="Rhea" id="RHEA:17358"/>
    </physiologicalReaction>
</comment>
<comment type="cofactor">
    <cofactor evidence="3">
        <name>FAD</name>
        <dbReference type="ChEBI" id="CHEBI:57692"/>
    </cofactor>
</comment>
<comment type="subcellular location">
    <subcellularLocation>
        <location evidence="5">Secreted</location>
        <location evidence="5">Cell wall</location>
    </subcellularLocation>
    <text>Associated with the cell wall.</text>
</comment>
<comment type="alternative products">
    <event type="alternative splicing"/>
    <isoform>
        <id>Q8W4J3-1</id>
        <name>1</name>
        <sequence type="displayed"/>
    </isoform>
    <isoform>
        <id>Q8W4J3-2</id>
        <name>2</name>
        <sequence type="described" ref="VSP_039985"/>
    </isoform>
</comment>
<comment type="tissue specificity">
    <text evidence="5">Highly expressed in roots.</text>
</comment>
<comment type="induction">
    <text evidence="5">By salt and norspermidine treatments and phosphate starvation.</text>
</comment>
<comment type="miscellaneous">
    <text>Plants lacking QSOX1 display more sensitivity to the toxic cations lithium and sodium than wild-type plants.</text>
</comment>
<comment type="sequence caution" evidence="6">
    <conflict type="erroneous gene model prediction">
        <sequence resource="EMBL-CDS" id="AAF31025"/>
    </conflict>
</comment>
<reference key="1">
    <citation type="journal article" date="2000" name="Nature">
        <title>Sequence and analysis of chromosome 1 of the plant Arabidopsis thaliana.</title>
        <authorList>
            <person name="Theologis A."/>
            <person name="Ecker J.R."/>
            <person name="Palm C.J."/>
            <person name="Federspiel N.A."/>
            <person name="Kaul S."/>
            <person name="White O."/>
            <person name="Alonso J."/>
            <person name="Altafi H."/>
            <person name="Araujo R."/>
            <person name="Bowman C.L."/>
            <person name="Brooks S.Y."/>
            <person name="Buehler E."/>
            <person name="Chan A."/>
            <person name="Chao Q."/>
            <person name="Chen H."/>
            <person name="Cheuk R.F."/>
            <person name="Chin C.W."/>
            <person name="Chung M.K."/>
            <person name="Conn L."/>
            <person name="Conway A.B."/>
            <person name="Conway A.R."/>
            <person name="Creasy T.H."/>
            <person name="Dewar K."/>
            <person name="Dunn P."/>
            <person name="Etgu P."/>
            <person name="Feldblyum T.V."/>
            <person name="Feng J.-D."/>
            <person name="Fong B."/>
            <person name="Fujii C.Y."/>
            <person name="Gill J.E."/>
            <person name="Goldsmith A.D."/>
            <person name="Haas B."/>
            <person name="Hansen N.F."/>
            <person name="Hughes B."/>
            <person name="Huizar L."/>
            <person name="Hunter J.L."/>
            <person name="Jenkins J."/>
            <person name="Johnson-Hopson C."/>
            <person name="Khan S."/>
            <person name="Khaykin E."/>
            <person name="Kim C.J."/>
            <person name="Koo H.L."/>
            <person name="Kremenetskaia I."/>
            <person name="Kurtz D.B."/>
            <person name="Kwan A."/>
            <person name="Lam B."/>
            <person name="Langin-Hooper S."/>
            <person name="Lee A."/>
            <person name="Lee J.M."/>
            <person name="Lenz C.A."/>
            <person name="Li J.H."/>
            <person name="Li Y.-P."/>
            <person name="Lin X."/>
            <person name="Liu S.X."/>
            <person name="Liu Z.A."/>
            <person name="Luros J.S."/>
            <person name="Maiti R."/>
            <person name="Marziali A."/>
            <person name="Militscher J."/>
            <person name="Miranda M."/>
            <person name="Nguyen M."/>
            <person name="Nierman W.C."/>
            <person name="Osborne B.I."/>
            <person name="Pai G."/>
            <person name="Peterson J."/>
            <person name="Pham P.K."/>
            <person name="Rizzo M."/>
            <person name="Rooney T."/>
            <person name="Rowley D."/>
            <person name="Sakano H."/>
            <person name="Salzberg S.L."/>
            <person name="Schwartz J.R."/>
            <person name="Shinn P."/>
            <person name="Southwick A.M."/>
            <person name="Sun H."/>
            <person name="Tallon L.J."/>
            <person name="Tambunga G."/>
            <person name="Toriumi M.J."/>
            <person name="Town C.D."/>
            <person name="Utterback T."/>
            <person name="Van Aken S."/>
            <person name="Vaysberg M."/>
            <person name="Vysotskaia V.S."/>
            <person name="Walker M."/>
            <person name="Wu D."/>
            <person name="Yu G."/>
            <person name="Fraser C.M."/>
            <person name="Venter J.C."/>
            <person name="Davis R.W."/>
        </authorList>
    </citation>
    <scope>NUCLEOTIDE SEQUENCE [LARGE SCALE GENOMIC DNA]</scope>
    <source>
        <strain>cv. Columbia</strain>
    </source>
</reference>
<reference key="2">
    <citation type="journal article" date="2017" name="Plant J.">
        <title>Araport11: a complete reannotation of the Arabidopsis thaliana reference genome.</title>
        <authorList>
            <person name="Cheng C.Y."/>
            <person name="Krishnakumar V."/>
            <person name="Chan A.P."/>
            <person name="Thibaud-Nissen F."/>
            <person name="Schobel S."/>
            <person name="Town C.D."/>
        </authorList>
    </citation>
    <scope>GENOME REANNOTATION</scope>
    <source>
        <strain>cv. Columbia</strain>
    </source>
</reference>
<reference key="3">
    <citation type="journal article" date="2003" name="Science">
        <title>Empirical analysis of transcriptional activity in the Arabidopsis genome.</title>
        <authorList>
            <person name="Yamada K."/>
            <person name="Lim J."/>
            <person name="Dale J.M."/>
            <person name="Chen H."/>
            <person name="Shinn P."/>
            <person name="Palm C.J."/>
            <person name="Southwick A.M."/>
            <person name="Wu H.C."/>
            <person name="Kim C.J."/>
            <person name="Nguyen M."/>
            <person name="Pham P.K."/>
            <person name="Cheuk R.F."/>
            <person name="Karlin-Newmann G."/>
            <person name="Liu S.X."/>
            <person name="Lam B."/>
            <person name="Sakano H."/>
            <person name="Wu T."/>
            <person name="Yu G."/>
            <person name="Miranda M."/>
            <person name="Quach H.L."/>
            <person name="Tripp M."/>
            <person name="Chang C.H."/>
            <person name="Lee J.M."/>
            <person name="Toriumi M.J."/>
            <person name="Chan M.M."/>
            <person name="Tang C.C."/>
            <person name="Onodera C.S."/>
            <person name="Deng J.M."/>
            <person name="Akiyama K."/>
            <person name="Ansari Y."/>
            <person name="Arakawa T."/>
            <person name="Banh J."/>
            <person name="Banno F."/>
            <person name="Bowser L."/>
            <person name="Brooks S.Y."/>
            <person name="Carninci P."/>
            <person name="Chao Q."/>
            <person name="Choy N."/>
            <person name="Enju A."/>
            <person name="Goldsmith A.D."/>
            <person name="Gurjal M."/>
            <person name="Hansen N.F."/>
            <person name="Hayashizaki Y."/>
            <person name="Johnson-Hopson C."/>
            <person name="Hsuan V.W."/>
            <person name="Iida K."/>
            <person name="Karnes M."/>
            <person name="Khan S."/>
            <person name="Koesema E."/>
            <person name="Ishida J."/>
            <person name="Jiang P.X."/>
            <person name="Jones T."/>
            <person name="Kawai J."/>
            <person name="Kamiya A."/>
            <person name="Meyers C."/>
            <person name="Nakajima M."/>
            <person name="Narusaka M."/>
            <person name="Seki M."/>
            <person name="Sakurai T."/>
            <person name="Satou M."/>
            <person name="Tamse R."/>
            <person name="Vaysberg M."/>
            <person name="Wallender E.K."/>
            <person name="Wong C."/>
            <person name="Yamamura Y."/>
            <person name="Yuan S."/>
            <person name="Shinozaki K."/>
            <person name="Davis R.W."/>
            <person name="Theologis A."/>
            <person name="Ecker J.R."/>
        </authorList>
    </citation>
    <scope>NUCLEOTIDE SEQUENCE [LARGE SCALE MRNA] (ISOFORM 1)</scope>
    <source>
        <strain>cv. Columbia</strain>
    </source>
</reference>
<reference key="4">
    <citation type="journal article" date="2007" name="EMBO J.">
        <title>An Arabidopsis quiescin-sulfhydryl oxidase regulates cation homeostasis at the root symplast-xylem interface.</title>
        <authorList>
            <person name="Alejandro S."/>
            <person name="Rodriguez P.L."/>
            <person name="Belles J.M."/>
            <person name="Yenush L."/>
            <person name="Garcia-Sanchez M.J."/>
            <person name="Fernandez J.A."/>
            <person name="Serrano R."/>
        </authorList>
    </citation>
    <scope>FUNCTION</scope>
    <scope>CATALYTIC ACTIVITY</scope>
    <scope>SUBCELLULAR LOCATION</scope>
    <scope>TISSUE SPECIFICITY</scope>
    <scope>INDUCTION</scope>
</reference>
<proteinExistence type="evidence at protein level"/>
<feature type="signal peptide" evidence="2">
    <location>
        <begin position="1"/>
        <end position="19"/>
    </location>
</feature>
<feature type="chain" id="PRO_0000400050" description="Sulfhydryl oxidase 1">
    <location>
        <begin position="20"/>
        <end position="528"/>
    </location>
</feature>
<feature type="domain" description="Thioredoxin" evidence="4">
    <location>
        <begin position="35"/>
        <end position="170"/>
    </location>
</feature>
<feature type="domain" description="ERV/ALR sulfhydryl oxidase" evidence="3">
    <location>
        <begin position="295"/>
        <end position="397"/>
    </location>
</feature>
<feature type="active site" description="Nucleophile" evidence="1">
    <location>
        <position position="72"/>
    </location>
</feature>
<feature type="active site" description="Nucleophile" evidence="1">
    <location>
        <position position="75"/>
    </location>
</feature>
<feature type="binding site" evidence="1">
    <location>
        <position position="300"/>
    </location>
    <ligand>
        <name>FAD</name>
        <dbReference type="ChEBI" id="CHEBI:57692"/>
    </ligand>
</feature>
<feature type="binding site" evidence="1">
    <location>
        <position position="307"/>
    </location>
    <ligand>
        <name>FAD</name>
        <dbReference type="ChEBI" id="CHEBI:57692"/>
    </ligand>
</feature>
<feature type="binding site" evidence="1">
    <location>
        <position position="311"/>
    </location>
    <ligand>
        <name>FAD</name>
        <dbReference type="ChEBI" id="CHEBI:57692"/>
    </ligand>
</feature>
<feature type="binding site" evidence="1">
    <location>
        <position position="341"/>
    </location>
    <ligand>
        <name>FAD</name>
        <dbReference type="ChEBI" id="CHEBI:57692"/>
    </ligand>
</feature>
<feature type="binding site" evidence="1">
    <location>
        <position position="345"/>
    </location>
    <ligand>
        <name>FAD</name>
        <dbReference type="ChEBI" id="CHEBI:57692"/>
    </ligand>
</feature>
<feature type="binding site" evidence="1">
    <location>
        <begin position="368"/>
        <end position="375"/>
    </location>
    <ligand>
        <name>FAD</name>
        <dbReference type="ChEBI" id="CHEBI:57692"/>
    </ligand>
</feature>
<feature type="binding site" evidence="1">
    <location>
        <position position="394"/>
    </location>
    <ligand>
        <name>FAD</name>
        <dbReference type="ChEBI" id="CHEBI:57692"/>
    </ligand>
</feature>
<feature type="binding site" evidence="1">
    <location>
        <position position="397"/>
    </location>
    <ligand>
        <name>FAD</name>
        <dbReference type="ChEBI" id="CHEBI:57692"/>
    </ligand>
</feature>
<feature type="glycosylation site" description="N-linked (GlcNAc...) asparagine" evidence="2">
    <location>
        <position position="47"/>
    </location>
</feature>
<feature type="glycosylation site" description="N-linked (GlcNAc...) asparagine" evidence="2">
    <location>
        <position position="186"/>
    </location>
</feature>
<feature type="glycosylation site" description="N-linked (GlcNAc...) asparagine" evidence="2">
    <location>
        <position position="297"/>
    </location>
</feature>
<feature type="disulfide bond" description="Redox-active" evidence="3 4">
    <location>
        <begin position="72"/>
        <end position="75"/>
    </location>
</feature>
<feature type="disulfide bond" evidence="3">
    <location>
        <begin position="292"/>
        <end position="304"/>
    </location>
</feature>
<feature type="disulfide bond" evidence="3">
    <location>
        <begin position="339"/>
        <end position="342"/>
    </location>
</feature>
<feature type="disulfide bond" evidence="3">
    <location>
        <begin position="403"/>
        <end position="406"/>
    </location>
</feature>
<feature type="splice variant" id="VSP_039985" description="In isoform 2." evidence="6">
    <original>YNYNPHYLKRYNSNYMVMNTFSNTESEREKE</original>
    <variation>QQIQR</variation>
    <location>
        <begin position="497"/>
        <end position="527"/>
    </location>
</feature>
<accession>Q8W4J3</accession>
<accession>Q3EDC3</accession>
<accession>Q9M9Q3</accession>
<sequence>MSLIHLFLLLGLLSLEAAASFSPGSRSILRDIGSNVADQKDNAIELNATNFDSVFQDSPAKYAVLEFFAHWCPACRNYKPHYEKVARLFNGADAVYPGVVLMTRVDCAIKMNVKLCDKFSINHYPMLFWAPPKRFVGGSWGPKQEKNEISVVNEWRTADLLLNWINKQIGSSYGLDDQKLGNLLSNISDQEQISQAIFDIEEATEEAFDIILAHKAIKSSETSASFIRFLQLLVAHHPSRRCRTGSAEILVNFDDICPSGECSYDQESGAKDSLRNFHICGKDVPRGYYRFCRGSKNETRGFSCGLWVLMHSLSVRIEDGESQFAFTAICDFINNFFMCDDCRRHFHDMCLSVKTPFKKARDIALWLWSTHNKVNERLKKDEDSLGTGDPKFPKMIWPPKQLCPSCYLSSTEKNIDWDHDQVYKFLKKYYGQKLVSVYKKNGESVSKEEVIAAAEEMAVPTNALVVPVGAALAIALASCAFGALACYWRTQQKNRKYNYNPHYLKRYNSNYMVMNTFSNTESEREKER</sequence>
<dbReference type="EC" id="1.8.3.2" evidence="7"/>
<dbReference type="EMBL" id="AC012189">
    <property type="protein sequence ID" value="AAF31025.1"/>
    <property type="status" value="ALT_SEQ"/>
    <property type="molecule type" value="Genomic_DNA"/>
</dbReference>
<dbReference type="EMBL" id="CP002684">
    <property type="protein sequence ID" value="AEE29255.1"/>
    <property type="molecule type" value="Genomic_DNA"/>
</dbReference>
<dbReference type="EMBL" id="CP002684">
    <property type="protein sequence ID" value="AEE29256.1"/>
    <property type="molecule type" value="Genomic_DNA"/>
</dbReference>
<dbReference type="EMBL" id="CP002684">
    <property type="protein sequence ID" value="ANM59589.1"/>
    <property type="molecule type" value="Genomic_DNA"/>
</dbReference>
<dbReference type="EMBL" id="AY062528">
    <property type="protein sequence ID" value="AAL32606.1"/>
    <property type="molecule type" value="mRNA"/>
</dbReference>
<dbReference type="EMBL" id="BT001218">
    <property type="protein sequence ID" value="AAN65105.1"/>
    <property type="molecule type" value="mRNA"/>
</dbReference>
<dbReference type="PIR" id="G86283">
    <property type="entry name" value="G86283"/>
</dbReference>
<dbReference type="RefSeq" id="NP_001321934.1">
    <molecule id="Q8W4J3-2"/>
    <property type="nucleotide sequence ID" value="NM_001332143.1"/>
</dbReference>
<dbReference type="RefSeq" id="NP_172955.1">
    <molecule id="Q8W4J3-1"/>
    <property type="nucleotide sequence ID" value="NM_101371.5"/>
</dbReference>
<dbReference type="RefSeq" id="NP_849664.1">
    <molecule id="Q8W4J3-2"/>
    <property type="nucleotide sequence ID" value="NM_179333.2"/>
</dbReference>
<dbReference type="SMR" id="Q8W4J3"/>
<dbReference type="FunCoup" id="Q8W4J3">
    <property type="interactions" value="271"/>
</dbReference>
<dbReference type="STRING" id="3702.Q8W4J3"/>
<dbReference type="GlyCosmos" id="Q8W4J3">
    <property type="glycosylation" value="3 sites, No reported glycans"/>
</dbReference>
<dbReference type="GlyGen" id="Q8W4J3">
    <property type="glycosylation" value="3 sites"/>
</dbReference>
<dbReference type="iPTMnet" id="Q8W4J3"/>
<dbReference type="PaxDb" id="3702-AT1G15020.2"/>
<dbReference type="ProteomicsDB" id="236516">
    <molecule id="Q8W4J3-1"/>
</dbReference>
<dbReference type="EnsemblPlants" id="AT1G15020.1">
    <molecule id="Q8W4J3-2"/>
    <property type="protein sequence ID" value="AT1G15020.1"/>
    <property type="gene ID" value="AT1G15020"/>
</dbReference>
<dbReference type="EnsemblPlants" id="AT1G15020.2">
    <molecule id="Q8W4J3-1"/>
    <property type="protein sequence ID" value="AT1G15020.2"/>
    <property type="gene ID" value="AT1G15020"/>
</dbReference>
<dbReference type="EnsemblPlants" id="AT1G15020.3">
    <molecule id="Q8W4J3-2"/>
    <property type="protein sequence ID" value="AT1G15020.3"/>
    <property type="gene ID" value="AT1G15020"/>
</dbReference>
<dbReference type="GeneID" id="838067"/>
<dbReference type="Gramene" id="AT1G15020.1">
    <molecule id="Q8W4J3-2"/>
    <property type="protein sequence ID" value="AT1G15020.1"/>
    <property type="gene ID" value="AT1G15020"/>
</dbReference>
<dbReference type="Gramene" id="AT1G15020.2">
    <molecule id="Q8W4J3-1"/>
    <property type="protein sequence ID" value="AT1G15020.2"/>
    <property type="gene ID" value="AT1G15020"/>
</dbReference>
<dbReference type="Gramene" id="AT1G15020.3">
    <molecule id="Q8W4J3-2"/>
    <property type="protein sequence ID" value="AT1G15020.3"/>
    <property type="gene ID" value="AT1G15020"/>
</dbReference>
<dbReference type="KEGG" id="ath:AT1G15020"/>
<dbReference type="Araport" id="AT1G15020"/>
<dbReference type="TAIR" id="AT1G15020">
    <property type="gene designation" value="QSOX1"/>
</dbReference>
<dbReference type="eggNOG" id="KOG1731">
    <property type="taxonomic scope" value="Eukaryota"/>
</dbReference>
<dbReference type="InParanoid" id="Q8W4J3"/>
<dbReference type="OMA" id="ILVVEEW"/>
<dbReference type="PhylomeDB" id="Q8W4J3"/>
<dbReference type="BioCyc" id="ARA:AT1G15020-MONOMER"/>
<dbReference type="BRENDA" id="1.8.3.2">
    <property type="organism ID" value="399"/>
</dbReference>
<dbReference type="PRO" id="PR:Q8W4J3"/>
<dbReference type="Proteomes" id="UP000006548">
    <property type="component" value="Chromosome 1"/>
</dbReference>
<dbReference type="ExpressionAtlas" id="Q8W4J3">
    <property type="expression patterns" value="baseline and differential"/>
</dbReference>
<dbReference type="GO" id="GO:0005576">
    <property type="term" value="C:extracellular region"/>
    <property type="evidence" value="ECO:0007669"/>
    <property type="project" value="UniProtKB-KW"/>
</dbReference>
<dbReference type="GO" id="GO:0000137">
    <property type="term" value="C:Golgi cis cisterna"/>
    <property type="evidence" value="ECO:0007005"/>
    <property type="project" value="TAIR"/>
</dbReference>
<dbReference type="GO" id="GO:0016971">
    <property type="term" value="F:flavin-dependent sulfhydryl oxidase activity"/>
    <property type="evidence" value="ECO:0007669"/>
    <property type="project" value="InterPro"/>
</dbReference>
<dbReference type="GO" id="GO:0016972">
    <property type="term" value="F:thiol oxidase activity"/>
    <property type="evidence" value="ECO:0000304"/>
    <property type="project" value="UniProtKB"/>
</dbReference>
<dbReference type="GO" id="GO:0043268">
    <property type="term" value="P:positive regulation of potassium ion transport"/>
    <property type="evidence" value="ECO:0000315"/>
    <property type="project" value="UniProtKB"/>
</dbReference>
<dbReference type="GO" id="GO:0043157">
    <property type="term" value="P:response to cation stress"/>
    <property type="evidence" value="ECO:0000315"/>
    <property type="project" value="TAIR"/>
</dbReference>
<dbReference type="CDD" id="cd02992">
    <property type="entry name" value="PDI_a_QSOX"/>
    <property type="match status" value="1"/>
</dbReference>
<dbReference type="FunFam" id="1.20.120.310:FF:000004">
    <property type="entry name" value="Sulfhydryl oxidase"/>
    <property type="match status" value="1"/>
</dbReference>
<dbReference type="FunFam" id="3.40.30.10:FF:000244">
    <property type="entry name" value="Sulfhydryl oxidase"/>
    <property type="match status" value="1"/>
</dbReference>
<dbReference type="Gene3D" id="1.20.120.310">
    <property type="entry name" value="ERV/ALR sulfhydryl oxidase domain"/>
    <property type="match status" value="1"/>
</dbReference>
<dbReference type="Gene3D" id="3.40.30.10">
    <property type="entry name" value="Glutaredoxin"/>
    <property type="match status" value="1"/>
</dbReference>
<dbReference type="InterPro" id="IPR036774">
    <property type="entry name" value="ERV/ALR_sulphydryl_oxid_sf"/>
</dbReference>
<dbReference type="InterPro" id="IPR017905">
    <property type="entry name" value="ERV/ALR_sulphydryl_oxidase"/>
</dbReference>
<dbReference type="InterPro" id="IPR039798">
    <property type="entry name" value="Sulfhydryl_oxidase"/>
</dbReference>
<dbReference type="InterPro" id="IPR036249">
    <property type="entry name" value="Thioredoxin-like_sf"/>
</dbReference>
<dbReference type="InterPro" id="IPR017937">
    <property type="entry name" value="Thioredoxin_CS"/>
</dbReference>
<dbReference type="InterPro" id="IPR013766">
    <property type="entry name" value="Thioredoxin_domain"/>
</dbReference>
<dbReference type="PANTHER" id="PTHR22897">
    <property type="entry name" value="QUIESCIN Q6-RELATED SULFHYDRYL OXIDASE"/>
    <property type="match status" value="1"/>
</dbReference>
<dbReference type="PANTHER" id="PTHR22897:SF21">
    <property type="entry name" value="SULFHYDRYL OXIDASE 1"/>
    <property type="match status" value="1"/>
</dbReference>
<dbReference type="Pfam" id="PF04777">
    <property type="entry name" value="Evr1_Alr"/>
    <property type="match status" value="1"/>
</dbReference>
<dbReference type="Pfam" id="PF00085">
    <property type="entry name" value="Thioredoxin"/>
    <property type="match status" value="1"/>
</dbReference>
<dbReference type="SUPFAM" id="SSF69000">
    <property type="entry name" value="FAD-dependent thiol oxidase"/>
    <property type="match status" value="1"/>
</dbReference>
<dbReference type="SUPFAM" id="SSF52833">
    <property type="entry name" value="Thioredoxin-like"/>
    <property type="match status" value="1"/>
</dbReference>
<dbReference type="PROSITE" id="PS51324">
    <property type="entry name" value="ERV_ALR"/>
    <property type="match status" value="1"/>
</dbReference>
<dbReference type="PROSITE" id="PS00194">
    <property type="entry name" value="THIOREDOXIN_1"/>
    <property type="match status" value="1"/>
</dbReference>
<dbReference type="PROSITE" id="PS51352">
    <property type="entry name" value="THIOREDOXIN_2"/>
    <property type="match status" value="1"/>
</dbReference>
<gene>
    <name type="primary">QSOX1</name>
    <name type="synonym">QSO2</name>
    <name type="ordered locus">At1g15020</name>
    <name type="ORF">T15D22.7</name>
</gene>
<organism>
    <name type="scientific">Arabidopsis thaliana</name>
    <name type="common">Mouse-ear cress</name>
    <dbReference type="NCBI Taxonomy" id="3702"/>
    <lineage>
        <taxon>Eukaryota</taxon>
        <taxon>Viridiplantae</taxon>
        <taxon>Streptophyta</taxon>
        <taxon>Embryophyta</taxon>
        <taxon>Tracheophyta</taxon>
        <taxon>Spermatophyta</taxon>
        <taxon>Magnoliopsida</taxon>
        <taxon>eudicotyledons</taxon>
        <taxon>Gunneridae</taxon>
        <taxon>Pentapetalae</taxon>
        <taxon>rosids</taxon>
        <taxon>malvids</taxon>
        <taxon>Brassicales</taxon>
        <taxon>Brassicaceae</taxon>
        <taxon>Camelineae</taxon>
        <taxon>Arabidopsis</taxon>
    </lineage>
</organism>
<keyword id="KW-0025">Alternative splicing</keyword>
<keyword id="KW-0134">Cell wall</keyword>
<keyword id="KW-1015">Disulfide bond</keyword>
<keyword id="KW-0274">FAD</keyword>
<keyword id="KW-0285">Flavoprotein</keyword>
<keyword id="KW-0325">Glycoprotein</keyword>
<keyword id="KW-0560">Oxidoreductase</keyword>
<keyword id="KW-0676">Redox-active center</keyword>
<keyword id="KW-1185">Reference proteome</keyword>
<keyword id="KW-0964">Secreted</keyword>
<keyword id="KW-0732">Signal</keyword>
<protein>
    <recommendedName>
        <fullName>Sulfhydryl oxidase 1</fullName>
        <ecNumber evidence="7">1.8.3.2</ecNumber>
    </recommendedName>
    <alternativeName>
        <fullName>Quiescin-sulfhydryl oxidase 1</fullName>
        <shortName>AtQSOX1</shortName>
    </alternativeName>
</protein>
<evidence type="ECO:0000250" key="1"/>
<evidence type="ECO:0000255" key="2"/>
<evidence type="ECO:0000255" key="3">
    <source>
        <dbReference type="PROSITE-ProRule" id="PRU00654"/>
    </source>
</evidence>
<evidence type="ECO:0000255" key="4">
    <source>
        <dbReference type="PROSITE-ProRule" id="PRU00691"/>
    </source>
</evidence>
<evidence type="ECO:0000269" key="5">
    <source>
    </source>
</evidence>
<evidence type="ECO:0000305" key="6"/>
<evidence type="ECO:0000305" key="7">
    <source>
    </source>
</evidence>
<name>QSOX1_ARATH</name>